<proteinExistence type="inferred from homology"/>
<sequence>MKTITTFENKKVLVLGLARSGEAAARLLAKLGAIVTVNDGKPFDENPTAQSLLEEGIKVVCGSHPLELLDEDFCYMIKNPGIPYNNPMVKKALEKQIPVLTEVELAYLVSESQLIGITGSNGKTTTTTMIAEVLNAGGQRGLLAGNIGFPASEVVQAADDKDILVMELSSFQLMGVKEFRPHIAVITNLMPTHLDYHGSFEDYVAAKWNIQNQMSSSDFLVLNFNQGISKELAKTTKATIVPFSTTEKVDGAYVQDKQLFYKGENIMLVDDIGVPGSHNVENALATIAVAKLAGISNQVIRETLSNFGGVKHRLQSLGKVHGISFYNDSKSTNILATQKALSGFDNTKVILIAGGLDRGNEFDELIPDITGLKHMVVLGESASRVKRAAQKAGVTYSDALDVRDAVHKAYEVAQQGDVILLSPANASWDMYKNFEVRGDEFIDTFESLRGE</sequence>
<evidence type="ECO:0000255" key="1">
    <source>
        <dbReference type="HAMAP-Rule" id="MF_00639"/>
    </source>
</evidence>
<accession>Q8E6P1</accession>
<comment type="function">
    <text evidence="1">Cell wall formation. Catalyzes the addition of glutamate to the nucleotide precursor UDP-N-acetylmuramoyl-L-alanine (UMA).</text>
</comment>
<comment type="catalytic activity">
    <reaction evidence="1">
        <text>UDP-N-acetyl-alpha-D-muramoyl-L-alanine + D-glutamate + ATP = UDP-N-acetyl-alpha-D-muramoyl-L-alanyl-D-glutamate + ADP + phosphate + H(+)</text>
        <dbReference type="Rhea" id="RHEA:16429"/>
        <dbReference type="ChEBI" id="CHEBI:15378"/>
        <dbReference type="ChEBI" id="CHEBI:29986"/>
        <dbReference type="ChEBI" id="CHEBI:30616"/>
        <dbReference type="ChEBI" id="CHEBI:43474"/>
        <dbReference type="ChEBI" id="CHEBI:83898"/>
        <dbReference type="ChEBI" id="CHEBI:83900"/>
        <dbReference type="ChEBI" id="CHEBI:456216"/>
        <dbReference type="EC" id="6.3.2.9"/>
    </reaction>
</comment>
<comment type="pathway">
    <text evidence="1">Cell wall biogenesis; peptidoglycan biosynthesis.</text>
</comment>
<comment type="subcellular location">
    <subcellularLocation>
        <location evidence="1">Cytoplasm</location>
    </subcellularLocation>
</comment>
<comment type="similarity">
    <text evidence="1">Belongs to the MurCDEF family.</text>
</comment>
<organism>
    <name type="scientific">Streptococcus agalactiae serotype III (strain NEM316)</name>
    <dbReference type="NCBI Taxonomy" id="211110"/>
    <lineage>
        <taxon>Bacteria</taxon>
        <taxon>Bacillati</taxon>
        <taxon>Bacillota</taxon>
        <taxon>Bacilli</taxon>
        <taxon>Lactobacillales</taxon>
        <taxon>Streptococcaceae</taxon>
        <taxon>Streptococcus</taxon>
    </lineage>
</organism>
<gene>
    <name evidence="1" type="primary">murD</name>
    <name type="ordered locus">gbs0522</name>
</gene>
<name>MURD_STRA3</name>
<dbReference type="EC" id="6.3.2.9" evidence="1"/>
<dbReference type="EMBL" id="AL766845">
    <property type="protein sequence ID" value="CAD46166.1"/>
    <property type="molecule type" value="Genomic_DNA"/>
</dbReference>
<dbReference type="RefSeq" id="WP_000849675.1">
    <property type="nucleotide sequence ID" value="NC_004368.1"/>
</dbReference>
<dbReference type="SMR" id="Q8E6P1"/>
<dbReference type="KEGG" id="san:gbs0522"/>
<dbReference type="eggNOG" id="COG0771">
    <property type="taxonomic scope" value="Bacteria"/>
</dbReference>
<dbReference type="HOGENOM" id="CLU_032540_0_1_9"/>
<dbReference type="UniPathway" id="UPA00219"/>
<dbReference type="Proteomes" id="UP000000823">
    <property type="component" value="Chromosome"/>
</dbReference>
<dbReference type="GO" id="GO:0005737">
    <property type="term" value="C:cytoplasm"/>
    <property type="evidence" value="ECO:0007669"/>
    <property type="project" value="UniProtKB-SubCell"/>
</dbReference>
<dbReference type="GO" id="GO:0005524">
    <property type="term" value="F:ATP binding"/>
    <property type="evidence" value="ECO:0007669"/>
    <property type="project" value="UniProtKB-UniRule"/>
</dbReference>
<dbReference type="GO" id="GO:0008764">
    <property type="term" value="F:UDP-N-acetylmuramoylalanine-D-glutamate ligase activity"/>
    <property type="evidence" value="ECO:0007669"/>
    <property type="project" value="UniProtKB-UniRule"/>
</dbReference>
<dbReference type="GO" id="GO:0051301">
    <property type="term" value="P:cell division"/>
    <property type="evidence" value="ECO:0007669"/>
    <property type="project" value="UniProtKB-KW"/>
</dbReference>
<dbReference type="GO" id="GO:0071555">
    <property type="term" value="P:cell wall organization"/>
    <property type="evidence" value="ECO:0007669"/>
    <property type="project" value="UniProtKB-KW"/>
</dbReference>
<dbReference type="GO" id="GO:0009252">
    <property type="term" value="P:peptidoglycan biosynthetic process"/>
    <property type="evidence" value="ECO:0007669"/>
    <property type="project" value="UniProtKB-UniRule"/>
</dbReference>
<dbReference type="GO" id="GO:0008360">
    <property type="term" value="P:regulation of cell shape"/>
    <property type="evidence" value="ECO:0007669"/>
    <property type="project" value="UniProtKB-KW"/>
</dbReference>
<dbReference type="Gene3D" id="3.90.190.20">
    <property type="entry name" value="Mur ligase, C-terminal domain"/>
    <property type="match status" value="1"/>
</dbReference>
<dbReference type="Gene3D" id="3.40.1190.10">
    <property type="entry name" value="Mur-like, catalytic domain"/>
    <property type="match status" value="1"/>
</dbReference>
<dbReference type="Gene3D" id="3.40.50.720">
    <property type="entry name" value="NAD(P)-binding Rossmann-like Domain"/>
    <property type="match status" value="1"/>
</dbReference>
<dbReference type="HAMAP" id="MF_00639">
    <property type="entry name" value="MurD"/>
    <property type="match status" value="1"/>
</dbReference>
<dbReference type="InterPro" id="IPR036565">
    <property type="entry name" value="Mur-like_cat_sf"/>
</dbReference>
<dbReference type="InterPro" id="IPR004101">
    <property type="entry name" value="Mur_ligase_C"/>
</dbReference>
<dbReference type="InterPro" id="IPR036615">
    <property type="entry name" value="Mur_ligase_C_dom_sf"/>
</dbReference>
<dbReference type="InterPro" id="IPR013221">
    <property type="entry name" value="Mur_ligase_cen"/>
</dbReference>
<dbReference type="InterPro" id="IPR005762">
    <property type="entry name" value="MurD"/>
</dbReference>
<dbReference type="NCBIfam" id="TIGR01087">
    <property type="entry name" value="murD"/>
    <property type="match status" value="1"/>
</dbReference>
<dbReference type="PANTHER" id="PTHR43692">
    <property type="entry name" value="UDP-N-ACETYLMURAMOYLALANINE--D-GLUTAMATE LIGASE"/>
    <property type="match status" value="1"/>
</dbReference>
<dbReference type="PANTHER" id="PTHR43692:SF1">
    <property type="entry name" value="UDP-N-ACETYLMURAMOYLALANINE--D-GLUTAMATE LIGASE"/>
    <property type="match status" value="1"/>
</dbReference>
<dbReference type="Pfam" id="PF02875">
    <property type="entry name" value="Mur_ligase_C"/>
    <property type="match status" value="1"/>
</dbReference>
<dbReference type="Pfam" id="PF08245">
    <property type="entry name" value="Mur_ligase_M"/>
    <property type="match status" value="1"/>
</dbReference>
<dbReference type="Pfam" id="PF21799">
    <property type="entry name" value="MurD-like_N"/>
    <property type="match status" value="1"/>
</dbReference>
<dbReference type="SUPFAM" id="SSF51984">
    <property type="entry name" value="MurCD N-terminal domain"/>
    <property type="match status" value="1"/>
</dbReference>
<dbReference type="SUPFAM" id="SSF53623">
    <property type="entry name" value="MurD-like peptide ligases, catalytic domain"/>
    <property type="match status" value="1"/>
</dbReference>
<dbReference type="SUPFAM" id="SSF53244">
    <property type="entry name" value="MurD-like peptide ligases, peptide-binding domain"/>
    <property type="match status" value="1"/>
</dbReference>
<protein>
    <recommendedName>
        <fullName evidence="1">UDP-N-acetylmuramoylalanine--D-glutamate ligase</fullName>
        <ecNumber evidence="1">6.3.2.9</ecNumber>
    </recommendedName>
    <alternativeName>
        <fullName evidence="1">D-glutamic acid-adding enzyme</fullName>
    </alternativeName>
    <alternativeName>
        <fullName evidence="1">UDP-N-acetylmuramoyl-L-alanyl-D-glutamate synthetase</fullName>
    </alternativeName>
</protein>
<feature type="chain" id="PRO_0000109093" description="UDP-N-acetylmuramoylalanine--D-glutamate ligase">
    <location>
        <begin position="1"/>
        <end position="451"/>
    </location>
</feature>
<feature type="binding site" evidence="1">
    <location>
        <begin position="119"/>
        <end position="125"/>
    </location>
    <ligand>
        <name>ATP</name>
        <dbReference type="ChEBI" id="CHEBI:30616"/>
    </ligand>
</feature>
<reference key="1">
    <citation type="journal article" date="2002" name="Mol. Microbiol.">
        <title>Genome sequence of Streptococcus agalactiae, a pathogen causing invasive neonatal disease.</title>
        <authorList>
            <person name="Glaser P."/>
            <person name="Rusniok C."/>
            <person name="Buchrieser C."/>
            <person name="Chevalier F."/>
            <person name="Frangeul L."/>
            <person name="Msadek T."/>
            <person name="Zouine M."/>
            <person name="Couve E."/>
            <person name="Lalioui L."/>
            <person name="Poyart C."/>
            <person name="Trieu-Cuot P."/>
            <person name="Kunst F."/>
        </authorList>
    </citation>
    <scope>NUCLEOTIDE SEQUENCE [LARGE SCALE GENOMIC DNA]</scope>
    <source>
        <strain>NEM316</strain>
    </source>
</reference>
<keyword id="KW-0067">ATP-binding</keyword>
<keyword id="KW-0131">Cell cycle</keyword>
<keyword id="KW-0132">Cell division</keyword>
<keyword id="KW-0133">Cell shape</keyword>
<keyword id="KW-0961">Cell wall biogenesis/degradation</keyword>
<keyword id="KW-0963">Cytoplasm</keyword>
<keyword id="KW-0436">Ligase</keyword>
<keyword id="KW-0547">Nucleotide-binding</keyword>
<keyword id="KW-0573">Peptidoglycan synthesis</keyword>